<proteinExistence type="inferred from homology"/>
<feature type="chain" id="PRO_0000120696" description="NAD kinase">
    <location>
        <begin position="1"/>
        <end position="280"/>
    </location>
</feature>
<feature type="active site" description="Proton acceptor" evidence="1">
    <location>
        <position position="67"/>
    </location>
</feature>
<feature type="binding site" evidence="1">
    <location>
        <begin position="67"/>
        <end position="68"/>
    </location>
    <ligand>
        <name>NAD(+)</name>
        <dbReference type="ChEBI" id="CHEBI:57540"/>
    </ligand>
</feature>
<feature type="binding site" evidence="1">
    <location>
        <position position="72"/>
    </location>
    <ligand>
        <name>NAD(+)</name>
        <dbReference type="ChEBI" id="CHEBI:57540"/>
    </ligand>
</feature>
<feature type="binding site" evidence="1">
    <location>
        <begin position="138"/>
        <end position="139"/>
    </location>
    <ligand>
        <name>NAD(+)</name>
        <dbReference type="ChEBI" id="CHEBI:57540"/>
    </ligand>
</feature>
<feature type="binding site" evidence="1">
    <location>
        <position position="167"/>
    </location>
    <ligand>
        <name>NAD(+)</name>
        <dbReference type="ChEBI" id="CHEBI:57540"/>
    </ligand>
</feature>
<feature type="binding site" evidence="1">
    <location>
        <position position="175"/>
    </location>
    <ligand>
        <name>NAD(+)</name>
        <dbReference type="ChEBI" id="CHEBI:57540"/>
    </ligand>
</feature>
<feature type="binding site" evidence="1">
    <location>
        <begin position="178"/>
        <end position="183"/>
    </location>
    <ligand>
        <name>NAD(+)</name>
        <dbReference type="ChEBI" id="CHEBI:57540"/>
    </ligand>
</feature>
<feature type="binding site" evidence="1">
    <location>
        <position position="237"/>
    </location>
    <ligand>
        <name>NAD(+)</name>
        <dbReference type="ChEBI" id="CHEBI:57540"/>
    </ligand>
</feature>
<protein>
    <recommendedName>
        <fullName evidence="1">NAD kinase</fullName>
        <ecNumber evidence="1">2.7.1.23</ecNumber>
    </recommendedName>
    <alternativeName>
        <fullName evidence="1">ATP-dependent NAD kinase</fullName>
    </alternativeName>
</protein>
<dbReference type="EC" id="2.7.1.23" evidence="1"/>
<dbReference type="EMBL" id="BA000002">
    <property type="protein sequence ID" value="BAA80089.2"/>
    <property type="molecule type" value="Genomic_DNA"/>
</dbReference>
<dbReference type="PIR" id="A72711">
    <property type="entry name" value="A72711"/>
</dbReference>
<dbReference type="RefSeq" id="WP_010866173.1">
    <property type="nucleotide sequence ID" value="NC_000854.2"/>
</dbReference>
<dbReference type="SMR" id="Q9YD08"/>
<dbReference type="STRING" id="272557.APE_1104.1"/>
<dbReference type="EnsemblBacteria" id="BAA80089">
    <property type="protein sequence ID" value="BAA80089"/>
    <property type="gene ID" value="APE_1104.1"/>
</dbReference>
<dbReference type="GeneID" id="1445791"/>
<dbReference type="KEGG" id="ape:APE_1104.1"/>
<dbReference type="PATRIC" id="fig|272557.25.peg.771"/>
<dbReference type="eggNOG" id="arCOG01348">
    <property type="taxonomic scope" value="Archaea"/>
</dbReference>
<dbReference type="Proteomes" id="UP000002518">
    <property type="component" value="Chromosome"/>
</dbReference>
<dbReference type="GO" id="GO:0005737">
    <property type="term" value="C:cytoplasm"/>
    <property type="evidence" value="ECO:0007669"/>
    <property type="project" value="UniProtKB-SubCell"/>
</dbReference>
<dbReference type="GO" id="GO:0005524">
    <property type="term" value="F:ATP binding"/>
    <property type="evidence" value="ECO:0007669"/>
    <property type="project" value="UniProtKB-KW"/>
</dbReference>
<dbReference type="GO" id="GO:0046872">
    <property type="term" value="F:metal ion binding"/>
    <property type="evidence" value="ECO:0007669"/>
    <property type="project" value="UniProtKB-UniRule"/>
</dbReference>
<dbReference type="GO" id="GO:0003951">
    <property type="term" value="F:NAD+ kinase activity"/>
    <property type="evidence" value="ECO:0007669"/>
    <property type="project" value="UniProtKB-UniRule"/>
</dbReference>
<dbReference type="GO" id="GO:0019674">
    <property type="term" value="P:NAD metabolic process"/>
    <property type="evidence" value="ECO:0007669"/>
    <property type="project" value="InterPro"/>
</dbReference>
<dbReference type="GO" id="GO:0006741">
    <property type="term" value="P:NADP biosynthetic process"/>
    <property type="evidence" value="ECO:0007669"/>
    <property type="project" value="UniProtKB-UniRule"/>
</dbReference>
<dbReference type="Gene3D" id="3.40.50.10330">
    <property type="entry name" value="Probable inorganic polyphosphate/atp-NAD kinase, domain 1"/>
    <property type="match status" value="1"/>
</dbReference>
<dbReference type="Gene3D" id="2.60.200.30">
    <property type="entry name" value="Probable inorganic polyphosphate/atp-NAD kinase, domain 2"/>
    <property type="match status" value="1"/>
</dbReference>
<dbReference type="HAMAP" id="MF_00361">
    <property type="entry name" value="NAD_kinase"/>
    <property type="match status" value="1"/>
</dbReference>
<dbReference type="InterPro" id="IPR017438">
    <property type="entry name" value="ATP-NAD_kinase_N"/>
</dbReference>
<dbReference type="InterPro" id="IPR017437">
    <property type="entry name" value="ATP-NAD_kinase_PpnK-typ_C"/>
</dbReference>
<dbReference type="InterPro" id="IPR016064">
    <property type="entry name" value="NAD/diacylglycerol_kinase_sf"/>
</dbReference>
<dbReference type="InterPro" id="IPR002504">
    <property type="entry name" value="NADK"/>
</dbReference>
<dbReference type="PANTHER" id="PTHR20275:SF43">
    <property type="entry name" value="BIFUNCTIONAL NADP PHOSPHATASE_NAD KINASE"/>
    <property type="match status" value="1"/>
</dbReference>
<dbReference type="PANTHER" id="PTHR20275">
    <property type="entry name" value="NAD KINASE"/>
    <property type="match status" value="1"/>
</dbReference>
<dbReference type="Pfam" id="PF01513">
    <property type="entry name" value="NAD_kinase"/>
    <property type="match status" value="1"/>
</dbReference>
<dbReference type="Pfam" id="PF20143">
    <property type="entry name" value="NAD_kinase_C"/>
    <property type="match status" value="1"/>
</dbReference>
<dbReference type="SUPFAM" id="SSF111331">
    <property type="entry name" value="NAD kinase/diacylglycerol kinase-like"/>
    <property type="match status" value="1"/>
</dbReference>
<organism>
    <name type="scientific">Aeropyrum pernix (strain ATCC 700893 / DSM 11879 / JCM 9820 / NBRC 100138 / K1)</name>
    <dbReference type="NCBI Taxonomy" id="272557"/>
    <lineage>
        <taxon>Archaea</taxon>
        <taxon>Thermoproteota</taxon>
        <taxon>Thermoprotei</taxon>
        <taxon>Desulfurococcales</taxon>
        <taxon>Desulfurococcaceae</taxon>
        <taxon>Aeropyrum</taxon>
    </lineage>
</organism>
<evidence type="ECO:0000255" key="1">
    <source>
        <dbReference type="HAMAP-Rule" id="MF_00361"/>
    </source>
</evidence>
<accession>Q9YD08</accession>
<gene>
    <name evidence="1" type="primary">nadK</name>
    <name type="ordered locus">APE_1104.1</name>
</gene>
<sequence length="280" mass="31067">MSGAVGLVVKRRSGIAEDVARLVVKELVESGVEVLVDETVDYPSLSGFPRFSISRDPPGRVVVVGGDGTLLRTFLRLGERESPLFMTIKAGKKGFLLDVERYEAVERLRDFLEGRFREVVYPRYRVYLEGEARACMFNDTAVTANNAKMARVHVFVDGDLAMNIDGDGVVVSTTAGSTAYSLSGGGPIIDPRLDVIVLTPLNPVQLFLRSIVVPSGSRVTVEASVYSNPLVVNIDGQYVYELEPGGIVDIERCGSGVRIARFRWWEDYYERLYTRLLAYW</sequence>
<comment type="function">
    <text evidence="1">Involved in the regulation of the intracellular balance of NAD and NADP, and is a key enzyme in the biosynthesis of NADP. Catalyzes specifically the phosphorylation on 2'-hydroxyl of the adenosine moiety of NAD to yield NADP.</text>
</comment>
<comment type="catalytic activity">
    <reaction evidence="1">
        <text>NAD(+) + ATP = ADP + NADP(+) + H(+)</text>
        <dbReference type="Rhea" id="RHEA:18629"/>
        <dbReference type="ChEBI" id="CHEBI:15378"/>
        <dbReference type="ChEBI" id="CHEBI:30616"/>
        <dbReference type="ChEBI" id="CHEBI:57540"/>
        <dbReference type="ChEBI" id="CHEBI:58349"/>
        <dbReference type="ChEBI" id="CHEBI:456216"/>
        <dbReference type="EC" id="2.7.1.23"/>
    </reaction>
</comment>
<comment type="cofactor">
    <cofactor evidence="1">
        <name>a divalent metal cation</name>
        <dbReference type="ChEBI" id="CHEBI:60240"/>
    </cofactor>
</comment>
<comment type="subcellular location">
    <subcellularLocation>
        <location evidence="1">Cytoplasm</location>
    </subcellularLocation>
</comment>
<comment type="similarity">
    <text evidence="1">Belongs to the NAD kinase family.</text>
</comment>
<keyword id="KW-0067">ATP-binding</keyword>
<keyword id="KW-0963">Cytoplasm</keyword>
<keyword id="KW-0418">Kinase</keyword>
<keyword id="KW-0520">NAD</keyword>
<keyword id="KW-0521">NADP</keyword>
<keyword id="KW-0547">Nucleotide-binding</keyword>
<keyword id="KW-1185">Reference proteome</keyword>
<keyword id="KW-0808">Transferase</keyword>
<name>NADK_AERPE</name>
<reference key="1">
    <citation type="journal article" date="1999" name="DNA Res.">
        <title>Complete genome sequence of an aerobic hyper-thermophilic crenarchaeon, Aeropyrum pernix K1.</title>
        <authorList>
            <person name="Kawarabayasi Y."/>
            <person name="Hino Y."/>
            <person name="Horikawa H."/>
            <person name="Yamazaki S."/>
            <person name="Haikawa Y."/>
            <person name="Jin-no K."/>
            <person name="Takahashi M."/>
            <person name="Sekine M."/>
            <person name="Baba S."/>
            <person name="Ankai A."/>
            <person name="Kosugi H."/>
            <person name="Hosoyama A."/>
            <person name="Fukui S."/>
            <person name="Nagai Y."/>
            <person name="Nishijima K."/>
            <person name="Nakazawa H."/>
            <person name="Takamiya M."/>
            <person name="Masuda S."/>
            <person name="Funahashi T."/>
            <person name="Tanaka T."/>
            <person name="Kudoh Y."/>
            <person name="Yamazaki J."/>
            <person name="Kushida N."/>
            <person name="Oguchi A."/>
            <person name="Aoki K."/>
            <person name="Kubota K."/>
            <person name="Nakamura Y."/>
            <person name="Nomura N."/>
            <person name="Sako Y."/>
            <person name="Kikuchi H."/>
        </authorList>
    </citation>
    <scope>NUCLEOTIDE SEQUENCE [LARGE SCALE GENOMIC DNA]</scope>
    <source>
        <strain>ATCC 700893 / DSM 11879 / JCM 9820 / NBRC 100138 / K1</strain>
    </source>
</reference>